<proteinExistence type="inferred from homology"/>
<keyword id="KW-0687">Ribonucleoprotein</keyword>
<keyword id="KW-0689">Ribosomal protein</keyword>
<feature type="chain" id="PRO_1000144421" description="Large ribosomal subunit protein bL17">
    <location>
        <begin position="1"/>
        <end position="127"/>
    </location>
</feature>
<evidence type="ECO:0000255" key="1">
    <source>
        <dbReference type="HAMAP-Rule" id="MF_01368"/>
    </source>
</evidence>
<evidence type="ECO:0000305" key="2"/>
<sequence length="127" mass="14365">MRHRKSGRQLNRNSSHRQAMFRNMAGSLVRHEIIKTTLPKAKELRRVVEPLITLAKTDSVANRRLAFARTRDNEIVAKLFNELGPRFASRAGGYTRILKCGFRAGDNAPMAYIELVDRSEKAEAAAE</sequence>
<comment type="subunit">
    <text evidence="1">Part of the 50S ribosomal subunit. Contacts protein L32.</text>
</comment>
<comment type="similarity">
    <text evidence="1">Belongs to the bacterial ribosomal protein bL17 family.</text>
</comment>
<dbReference type="EMBL" id="CU928163">
    <property type="protein sequence ID" value="CAR14916.1"/>
    <property type="molecule type" value="Genomic_DNA"/>
</dbReference>
<dbReference type="RefSeq" id="WP_001216368.1">
    <property type="nucleotide sequence ID" value="NC_011751.1"/>
</dbReference>
<dbReference type="RefSeq" id="YP_002414421.1">
    <property type="nucleotide sequence ID" value="NC_011751.1"/>
</dbReference>
<dbReference type="SMR" id="B7NDR6"/>
<dbReference type="STRING" id="585056.ECUMN_3768"/>
<dbReference type="GeneID" id="97442834"/>
<dbReference type="KEGG" id="eum:ECUMN_3768"/>
<dbReference type="PATRIC" id="fig|585056.7.peg.3942"/>
<dbReference type="HOGENOM" id="CLU_074407_2_0_6"/>
<dbReference type="Proteomes" id="UP000007097">
    <property type="component" value="Chromosome"/>
</dbReference>
<dbReference type="GO" id="GO:0022625">
    <property type="term" value="C:cytosolic large ribosomal subunit"/>
    <property type="evidence" value="ECO:0007669"/>
    <property type="project" value="TreeGrafter"/>
</dbReference>
<dbReference type="GO" id="GO:0003735">
    <property type="term" value="F:structural constituent of ribosome"/>
    <property type="evidence" value="ECO:0007669"/>
    <property type="project" value="InterPro"/>
</dbReference>
<dbReference type="GO" id="GO:0006412">
    <property type="term" value="P:translation"/>
    <property type="evidence" value="ECO:0007669"/>
    <property type="project" value="UniProtKB-UniRule"/>
</dbReference>
<dbReference type="FunFam" id="3.90.1030.10:FF:000001">
    <property type="entry name" value="50S ribosomal protein L17"/>
    <property type="match status" value="1"/>
</dbReference>
<dbReference type="Gene3D" id="3.90.1030.10">
    <property type="entry name" value="Ribosomal protein L17"/>
    <property type="match status" value="1"/>
</dbReference>
<dbReference type="HAMAP" id="MF_01368">
    <property type="entry name" value="Ribosomal_bL17"/>
    <property type="match status" value="1"/>
</dbReference>
<dbReference type="InterPro" id="IPR000456">
    <property type="entry name" value="Ribosomal_bL17"/>
</dbReference>
<dbReference type="InterPro" id="IPR047859">
    <property type="entry name" value="Ribosomal_bL17_CS"/>
</dbReference>
<dbReference type="InterPro" id="IPR036373">
    <property type="entry name" value="Ribosomal_bL17_sf"/>
</dbReference>
<dbReference type="NCBIfam" id="TIGR00059">
    <property type="entry name" value="L17"/>
    <property type="match status" value="1"/>
</dbReference>
<dbReference type="PANTHER" id="PTHR14413:SF16">
    <property type="entry name" value="LARGE RIBOSOMAL SUBUNIT PROTEIN BL17M"/>
    <property type="match status" value="1"/>
</dbReference>
<dbReference type="PANTHER" id="PTHR14413">
    <property type="entry name" value="RIBOSOMAL PROTEIN L17"/>
    <property type="match status" value="1"/>
</dbReference>
<dbReference type="Pfam" id="PF01196">
    <property type="entry name" value="Ribosomal_L17"/>
    <property type="match status" value="1"/>
</dbReference>
<dbReference type="SUPFAM" id="SSF64263">
    <property type="entry name" value="Prokaryotic ribosomal protein L17"/>
    <property type="match status" value="1"/>
</dbReference>
<dbReference type="PROSITE" id="PS01167">
    <property type="entry name" value="RIBOSOMAL_L17"/>
    <property type="match status" value="1"/>
</dbReference>
<protein>
    <recommendedName>
        <fullName evidence="1">Large ribosomal subunit protein bL17</fullName>
    </recommendedName>
    <alternativeName>
        <fullName evidence="2">50S ribosomal protein L17</fullName>
    </alternativeName>
</protein>
<organism>
    <name type="scientific">Escherichia coli O17:K52:H18 (strain UMN026 / ExPEC)</name>
    <dbReference type="NCBI Taxonomy" id="585056"/>
    <lineage>
        <taxon>Bacteria</taxon>
        <taxon>Pseudomonadati</taxon>
        <taxon>Pseudomonadota</taxon>
        <taxon>Gammaproteobacteria</taxon>
        <taxon>Enterobacterales</taxon>
        <taxon>Enterobacteriaceae</taxon>
        <taxon>Escherichia</taxon>
    </lineage>
</organism>
<reference key="1">
    <citation type="journal article" date="2009" name="PLoS Genet.">
        <title>Organised genome dynamics in the Escherichia coli species results in highly diverse adaptive paths.</title>
        <authorList>
            <person name="Touchon M."/>
            <person name="Hoede C."/>
            <person name="Tenaillon O."/>
            <person name="Barbe V."/>
            <person name="Baeriswyl S."/>
            <person name="Bidet P."/>
            <person name="Bingen E."/>
            <person name="Bonacorsi S."/>
            <person name="Bouchier C."/>
            <person name="Bouvet O."/>
            <person name="Calteau A."/>
            <person name="Chiapello H."/>
            <person name="Clermont O."/>
            <person name="Cruveiller S."/>
            <person name="Danchin A."/>
            <person name="Diard M."/>
            <person name="Dossat C."/>
            <person name="Karoui M.E."/>
            <person name="Frapy E."/>
            <person name="Garry L."/>
            <person name="Ghigo J.M."/>
            <person name="Gilles A.M."/>
            <person name="Johnson J."/>
            <person name="Le Bouguenec C."/>
            <person name="Lescat M."/>
            <person name="Mangenot S."/>
            <person name="Martinez-Jehanne V."/>
            <person name="Matic I."/>
            <person name="Nassif X."/>
            <person name="Oztas S."/>
            <person name="Petit M.A."/>
            <person name="Pichon C."/>
            <person name="Rouy Z."/>
            <person name="Ruf C.S."/>
            <person name="Schneider D."/>
            <person name="Tourret J."/>
            <person name="Vacherie B."/>
            <person name="Vallenet D."/>
            <person name="Medigue C."/>
            <person name="Rocha E.P.C."/>
            <person name="Denamur E."/>
        </authorList>
    </citation>
    <scope>NUCLEOTIDE SEQUENCE [LARGE SCALE GENOMIC DNA]</scope>
    <source>
        <strain>UMN026 / ExPEC</strain>
    </source>
</reference>
<name>RL17_ECOLU</name>
<gene>
    <name evidence="1" type="primary">rplQ</name>
    <name type="ordered locus">ECUMN_3768</name>
</gene>
<accession>B7NDR6</accession>